<feature type="chain" id="PRO_0000221015" description="Diuretic hormone">
    <location>
        <begin position="1"/>
        <end position="46"/>
    </location>
</feature>
<feature type="modified residue" description="Isoleucine amide" evidence="1">
    <location>
        <position position="46"/>
    </location>
</feature>
<proteinExistence type="evidence at protein level"/>
<protein>
    <recommendedName>
        <fullName>Diuretic hormone</fullName>
        <shortName>DH</shortName>
    </recommendedName>
    <alternativeName>
        <fullName>Diuretic peptide</fullName>
        <shortName>DP</shortName>
    </alternativeName>
</protein>
<comment type="function">
    <text>Regulation of fluid secretion. Stimulates primary urine secretion by Malpighian tubules and causes a dose-dependent stimulation of cAMP levels in the tubules.</text>
</comment>
<comment type="subcellular location">
    <subcellularLocation>
        <location>Secreted</location>
    </subcellularLocation>
</comment>
<comment type="similarity">
    <text evidence="2">Belongs to the sauvagine/corticotropin-releasing factor/urotensin I family.</text>
</comment>
<keyword id="KW-0027">Amidation</keyword>
<keyword id="KW-0903">Direct protein sequencing</keyword>
<keyword id="KW-0372">Hormone</keyword>
<keyword id="KW-0964">Secreted</keyword>
<name>DIUH_LOCMI</name>
<sequence length="46" mass="5364">MGMGPSLSIVNPMDVLRQRLLLEIARRRLRDAEEQIKANKDFLQQI</sequence>
<dbReference type="PIR" id="JH0243">
    <property type="entry name" value="SWLQDA"/>
</dbReference>
<dbReference type="SMR" id="P23465"/>
<dbReference type="GO" id="GO:0005576">
    <property type="term" value="C:extracellular region"/>
    <property type="evidence" value="ECO:0007669"/>
    <property type="project" value="UniProtKB-SubCell"/>
</dbReference>
<dbReference type="GO" id="GO:0005179">
    <property type="term" value="F:hormone activity"/>
    <property type="evidence" value="ECO:0007669"/>
    <property type="project" value="UniProtKB-KW"/>
</dbReference>
<dbReference type="InterPro" id="IPR018446">
    <property type="entry name" value="Corticotropin-releasing_fac_CS"/>
</dbReference>
<dbReference type="InterPro" id="IPR000187">
    <property type="entry name" value="CRF"/>
</dbReference>
<dbReference type="Pfam" id="PF00473">
    <property type="entry name" value="CRF"/>
    <property type="match status" value="1"/>
</dbReference>
<dbReference type="SMART" id="SM00039">
    <property type="entry name" value="CRF"/>
    <property type="match status" value="1"/>
</dbReference>
<dbReference type="PROSITE" id="PS00511">
    <property type="entry name" value="CRF"/>
    <property type="match status" value="1"/>
</dbReference>
<accession>P23465</accession>
<evidence type="ECO:0000269" key="1">
    <source>
    </source>
</evidence>
<evidence type="ECO:0000305" key="2"/>
<reference key="1">
    <citation type="journal article" date="1991" name="Biochem. Biophys. Res. Commun.">
        <title>Identification of a diuretic hormone of Locusta migratoria.</title>
        <authorList>
            <person name="Lehmberg E."/>
            <person name="Ota R.B."/>
            <person name="Furuya K."/>
            <person name="King D.S."/>
            <person name="Applebaum S.W."/>
            <person name="Ferenz H.-J."/>
            <person name="Schooly D.A."/>
        </authorList>
    </citation>
    <scope>PROTEIN SEQUENCE</scope>
    <source>
        <tissue>Brain</tissue>
    </source>
</reference>
<reference key="2">
    <citation type="journal article" date="1991" name="Biol. Chem. Hoppe-Seyler">
        <title>Characterization of a diuretic peptide from Locusta migratoria.</title>
        <authorList>
            <person name="Kay I."/>
            <person name="Wheeler C.H."/>
            <person name="Coast G.M."/>
            <person name="Totty N.F."/>
            <person name="Cusinato O."/>
            <person name="Patel M."/>
            <person name="Goldsworthy G.J."/>
        </authorList>
    </citation>
    <scope>PROTEIN SEQUENCE</scope>
    <scope>AMIDATION AT ILE-46</scope>
    <source>
        <tissue>Malpighian tubule</tissue>
    </source>
</reference>
<organism>
    <name type="scientific">Locusta migratoria</name>
    <name type="common">Migratory locust</name>
    <dbReference type="NCBI Taxonomy" id="7004"/>
    <lineage>
        <taxon>Eukaryota</taxon>
        <taxon>Metazoa</taxon>
        <taxon>Ecdysozoa</taxon>
        <taxon>Arthropoda</taxon>
        <taxon>Hexapoda</taxon>
        <taxon>Insecta</taxon>
        <taxon>Pterygota</taxon>
        <taxon>Neoptera</taxon>
        <taxon>Polyneoptera</taxon>
        <taxon>Orthoptera</taxon>
        <taxon>Caelifera</taxon>
        <taxon>Acrididea</taxon>
        <taxon>Acridomorpha</taxon>
        <taxon>Acridoidea</taxon>
        <taxon>Acrididae</taxon>
        <taxon>Oedipodinae</taxon>
        <taxon>Locusta</taxon>
    </lineage>
</organism>